<sequence length="145" mass="16255">MRQTFMANESNIERKWYVIDAEGQTLGRLSSEVASILRGKNKVTYTPHVDTGDYVIIINAAKIELTGKKESDKIYYRHSNHPGGIKSVTAGELKRNNPERLLETSIKGMLPSSRLGEKQGKKLFVYGGAEHPHAAQQPENYELRG</sequence>
<accession>Q4L881</accession>
<comment type="function">
    <text evidence="1">This protein is one of the early assembly proteins of the 50S ribosomal subunit, although it is not seen to bind rRNA by itself. It is important during the early stages of 50S assembly.</text>
</comment>
<comment type="subunit">
    <text evidence="1">Part of the 50S ribosomal subunit.</text>
</comment>
<comment type="similarity">
    <text evidence="1">Belongs to the universal ribosomal protein uL13 family.</text>
</comment>
<proteinExistence type="inferred from homology"/>
<organism>
    <name type="scientific">Staphylococcus haemolyticus (strain JCSC1435)</name>
    <dbReference type="NCBI Taxonomy" id="279808"/>
    <lineage>
        <taxon>Bacteria</taxon>
        <taxon>Bacillati</taxon>
        <taxon>Bacillota</taxon>
        <taxon>Bacilli</taxon>
        <taxon>Bacillales</taxon>
        <taxon>Staphylococcaceae</taxon>
        <taxon>Staphylococcus</taxon>
    </lineage>
</organism>
<dbReference type="EMBL" id="AP006716">
    <property type="protein sequence ID" value="BAE04144.1"/>
    <property type="molecule type" value="Genomic_DNA"/>
</dbReference>
<dbReference type="RefSeq" id="WP_011275149.1">
    <property type="nucleotide sequence ID" value="NC_007168.1"/>
</dbReference>
<dbReference type="SMR" id="Q4L881"/>
<dbReference type="GeneID" id="93780223"/>
<dbReference type="KEGG" id="sha:SH0835"/>
<dbReference type="eggNOG" id="COG0102">
    <property type="taxonomic scope" value="Bacteria"/>
</dbReference>
<dbReference type="HOGENOM" id="CLU_082184_2_2_9"/>
<dbReference type="OrthoDB" id="9801330at2"/>
<dbReference type="Proteomes" id="UP000000543">
    <property type="component" value="Chromosome"/>
</dbReference>
<dbReference type="GO" id="GO:0022625">
    <property type="term" value="C:cytosolic large ribosomal subunit"/>
    <property type="evidence" value="ECO:0007669"/>
    <property type="project" value="TreeGrafter"/>
</dbReference>
<dbReference type="GO" id="GO:0003729">
    <property type="term" value="F:mRNA binding"/>
    <property type="evidence" value="ECO:0007669"/>
    <property type="project" value="TreeGrafter"/>
</dbReference>
<dbReference type="GO" id="GO:0003735">
    <property type="term" value="F:structural constituent of ribosome"/>
    <property type="evidence" value="ECO:0007669"/>
    <property type="project" value="InterPro"/>
</dbReference>
<dbReference type="GO" id="GO:0017148">
    <property type="term" value="P:negative regulation of translation"/>
    <property type="evidence" value="ECO:0007669"/>
    <property type="project" value="TreeGrafter"/>
</dbReference>
<dbReference type="GO" id="GO:0006412">
    <property type="term" value="P:translation"/>
    <property type="evidence" value="ECO:0007669"/>
    <property type="project" value="UniProtKB-UniRule"/>
</dbReference>
<dbReference type="CDD" id="cd00392">
    <property type="entry name" value="Ribosomal_L13"/>
    <property type="match status" value="1"/>
</dbReference>
<dbReference type="FunFam" id="3.90.1180.10:FF:000001">
    <property type="entry name" value="50S ribosomal protein L13"/>
    <property type="match status" value="1"/>
</dbReference>
<dbReference type="Gene3D" id="3.90.1180.10">
    <property type="entry name" value="Ribosomal protein L13"/>
    <property type="match status" value="1"/>
</dbReference>
<dbReference type="HAMAP" id="MF_01366">
    <property type="entry name" value="Ribosomal_uL13"/>
    <property type="match status" value="1"/>
</dbReference>
<dbReference type="InterPro" id="IPR005822">
    <property type="entry name" value="Ribosomal_uL13"/>
</dbReference>
<dbReference type="InterPro" id="IPR005823">
    <property type="entry name" value="Ribosomal_uL13_bac-type"/>
</dbReference>
<dbReference type="InterPro" id="IPR023563">
    <property type="entry name" value="Ribosomal_uL13_CS"/>
</dbReference>
<dbReference type="InterPro" id="IPR036899">
    <property type="entry name" value="Ribosomal_uL13_sf"/>
</dbReference>
<dbReference type="NCBIfam" id="TIGR01066">
    <property type="entry name" value="rplM_bact"/>
    <property type="match status" value="1"/>
</dbReference>
<dbReference type="PANTHER" id="PTHR11545:SF2">
    <property type="entry name" value="LARGE RIBOSOMAL SUBUNIT PROTEIN UL13M"/>
    <property type="match status" value="1"/>
</dbReference>
<dbReference type="PANTHER" id="PTHR11545">
    <property type="entry name" value="RIBOSOMAL PROTEIN L13"/>
    <property type="match status" value="1"/>
</dbReference>
<dbReference type="Pfam" id="PF00572">
    <property type="entry name" value="Ribosomal_L13"/>
    <property type="match status" value="1"/>
</dbReference>
<dbReference type="PIRSF" id="PIRSF002181">
    <property type="entry name" value="Ribosomal_L13"/>
    <property type="match status" value="1"/>
</dbReference>
<dbReference type="SUPFAM" id="SSF52161">
    <property type="entry name" value="Ribosomal protein L13"/>
    <property type="match status" value="1"/>
</dbReference>
<dbReference type="PROSITE" id="PS00783">
    <property type="entry name" value="RIBOSOMAL_L13"/>
    <property type="match status" value="1"/>
</dbReference>
<protein>
    <recommendedName>
        <fullName evidence="1">Large ribosomal subunit protein uL13</fullName>
    </recommendedName>
    <alternativeName>
        <fullName evidence="2">50S ribosomal protein L13</fullName>
    </alternativeName>
</protein>
<reference key="1">
    <citation type="journal article" date="2005" name="J. Bacteriol.">
        <title>Whole-genome sequencing of Staphylococcus haemolyticus uncovers the extreme plasticity of its genome and the evolution of human-colonizing staphylococcal species.</title>
        <authorList>
            <person name="Takeuchi F."/>
            <person name="Watanabe S."/>
            <person name="Baba T."/>
            <person name="Yuzawa H."/>
            <person name="Ito T."/>
            <person name="Morimoto Y."/>
            <person name="Kuroda M."/>
            <person name="Cui L."/>
            <person name="Takahashi M."/>
            <person name="Ankai A."/>
            <person name="Baba S."/>
            <person name="Fukui S."/>
            <person name="Lee J.C."/>
            <person name="Hiramatsu K."/>
        </authorList>
    </citation>
    <scope>NUCLEOTIDE SEQUENCE [LARGE SCALE GENOMIC DNA]</scope>
    <source>
        <strain>JCSC1435</strain>
    </source>
</reference>
<evidence type="ECO:0000255" key="1">
    <source>
        <dbReference type="HAMAP-Rule" id="MF_01366"/>
    </source>
</evidence>
<evidence type="ECO:0000305" key="2"/>
<feature type="chain" id="PRO_0000223982" description="Large ribosomal subunit protein uL13">
    <location>
        <begin position="1"/>
        <end position="145"/>
    </location>
</feature>
<keyword id="KW-0687">Ribonucleoprotein</keyword>
<keyword id="KW-0689">Ribosomal protein</keyword>
<gene>
    <name evidence="1" type="primary">rplM</name>
    <name type="ordered locus">SH0835</name>
</gene>
<name>RL13_STAHJ</name>